<dbReference type="EMBL" id="AL513382">
    <property type="protein sequence ID" value="CAD08216.1"/>
    <property type="molecule type" value="Genomic_DNA"/>
</dbReference>
<dbReference type="EMBL" id="AE014613">
    <property type="protein sequence ID" value="AAO69450.1"/>
    <property type="molecule type" value="Genomic_DNA"/>
</dbReference>
<dbReference type="RefSeq" id="NP_455587.1">
    <property type="nucleotide sequence ID" value="NC_003198.1"/>
</dbReference>
<dbReference type="RefSeq" id="WP_000444726.1">
    <property type="nucleotide sequence ID" value="NZ_WSUR01000018.1"/>
</dbReference>
<dbReference type="SMR" id="Q8Z7R2"/>
<dbReference type="STRING" id="220341.gene:17585095"/>
<dbReference type="KEGG" id="stt:t1829"/>
<dbReference type="KEGG" id="sty:STY1120"/>
<dbReference type="PATRIC" id="fig|220341.7.peg.1123"/>
<dbReference type="eggNOG" id="ENOG5033835">
    <property type="taxonomic scope" value="Bacteria"/>
</dbReference>
<dbReference type="HOGENOM" id="CLU_2131737_0_0_6"/>
<dbReference type="OMA" id="DDEIQVY"/>
<dbReference type="OrthoDB" id="6561012at2"/>
<dbReference type="Proteomes" id="UP000000541">
    <property type="component" value="Chromosome"/>
</dbReference>
<dbReference type="Proteomes" id="UP000002670">
    <property type="component" value="Chromosome"/>
</dbReference>
<dbReference type="GO" id="GO:0005737">
    <property type="term" value="C:cytoplasm"/>
    <property type="evidence" value="ECO:0007669"/>
    <property type="project" value="UniProtKB-SubCell"/>
</dbReference>
<dbReference type="CDD" id="cd17022">
    <property type="entry name" value="T3SC_IA_SigE-like"/>
    <property type="match status" value="1"/>
</dbReference>
<dbReference type="Gene3D" id="3.30.1460.10">
    <property type="match status" value="1"/>
</dbReference>
<dbReference type="InterPro" id="IPR013095">
    <property type="entry name" value="T3SS_chaperone"/>
</dbReference>
<dbReference type="NCBIfam" id="NF011749">
    <property type="entry name" value="PRK15202.1"/>
    <property type="match status" value="1"/>
</dbReference>
<dbReference type="Pfam" id="PF07824">
    <property type="entry name" value="Chaperone_III"/>
    <property type="match status" value="1"/>
</dbReference>
<dbReference type="PIRSF" id="PIRSF034754">
    <property type="entry name" value="T3SS_chaperone"/>
    <property type="match status" value="1"/>
</dbReference>
<dbReference type="SUPFAM" id="SSF69635">
    <property type="entry name" value="Type III secretory system chaperone-like"/>
    <property type="match status" value="1"/>
</dbReference>
<proteinExistence type="inferred from homology"/>
<evidence type="ECO:0000250" key="1"/>
<evidence type="ECO:0000305" key="2"/>
<gene>
    <name type="primary">sigE</name>
    <name type="synonym">pipC</name>
    <name type="ordered locus">STY1120</name>
    <name type="ordered locus">t1829</name>
</gene>
<name>SIGE_SALTI</name>
<sequence>MESLLNRLYDALGLDAPEDEPLLIIDDGIQVYFNESDHTLEMCCPFMPLPDDTLTLQHFLRLNYASAVTIGADADNTALVALYRLPQTSTEEEALTGFELFISNVKQLKEHYA</sequence>
<organism>
    <name type="scientific">Salmonella typhi</name>
    <dbReference type="NCBI Taxonomy" id="90370"/>
    <lineage>
        <taxon>Bacteria</taxon>
        <taxon>Pseudomonadati</taxon>
        <taxon>Pseudomonadota</taxon>
        <taxon>Gammaproteobacteria</taxon>
        <taxon>Enterobacterales</taxon>
        <taxon>Enterobacteriaceae</taxon>
        <taxon>Salmonella</taxon>
    </lineage>
</organism>
<comment type="function">
    <text evidence="1">Molecular chaperone required for SopB/SigD stabilization and secretion.</text>
</comment>
<comment type="subunit">
    <text evidence="1">Homodimer or higher-order oligomers.</text>
</comment>
<comment type="subcellular location">
    <subcellularLocation>
        <location evidence="2">Cytoplasm</location>
    </subcellularLocation>
</comment>
<comment type="induction">
    <text evidence="1">Transcriptionally regulated by InvF and SicA. Also regulated by SirA (By similarity).</text>
</comment>
<comment type="similarity">
    <text evidence="2">Belongs to the IpgE/SigE chaperone family.</text>
</comment>
<feature type="chain" id="PRO_0000160574" description="Chaperone protein SigE">
    <location>
        <begin position="1"/>
        <end position="113"/>
    </location>
</feature>
<accession>Q8Z7R2</accession>
<accession>Q7C972</accession>
<keyword id="KW-0143">Chaperone</keyword>
<keyword id="KW-0963">Cytoplasm</keyword>
<keyword id="KW-0843">Virulence</keyword>
<protein>
    <recommendedName>
        <fullName>Chaperone protein SigE</fullName>
    </recommendedName>
</protein>
<reference key="1">
    <citation type="journal article" date="2001" name="Nature">
        <title>Complete genome sequence of a multiple drug resistant Salmonella enterica serovar Typhi CT18.</title>
        <authorList>
            <person name="Parkhill J."/>
            <person name="Dougan G."/>
            <person name="James K.D."/>
            <person name="Thomson N.R."/>
            <person name="Pickard D."/>
            <person name="Wain J."/>
            <person name="Churcher C.M."/>
            <person name="Mungall K.L."/>
            <person name="Bentley S.D."/>
            <person name="Holden M.T.G."/>
            <person name="Sebaihia M."/>
            <person name="Baker S."/>
            <person name="Basham D."/>
            <person name="Brooks K."/>
            <person name="Chillingworth T."/>
            <person name="Connerton P."/>
            <person name="Cronin A."/>
            <person name="Davis P."/>
            <person name="Davies R.M."/>
            <person name="Dowd L."/>
            <person name="White N."/>
            <person name="Farrar J."/>
            <person name="Feltwell T."/>
            <person name="Hamlin N."/>
            <person name="Haque A."/>
            <person name="Hien T.T."/>
            <person name="Holroyd S."/>
            <person name="Jagels K."/>
            <person name="Krogh A."/>
            <person name="Larsen T.S."/>
            <person name="Leather S."/>
            <person name="Moule S."/>
            <person name="O'Gaora P."/>
            <person name="Parry C."/>
            <person name="Quail M.A."/>
            <person name="Rutherford K.M."/>
            <person name="Simmonds M."/>
            <person name="Skelton J."/>
            <person name="Stevens K."/>
            <person name="Whitehead S."/>
            <person name="Barrell B.G."/>
        </authorList>
    </citation>
    <scope>NUCLEOTIDE SEQUENCE [LARGE SCALE GENOMIC DNA]</scope>
    <source>
        <strain>CT18</strain>
    </source>
</reference>
<reference key="2">
    <citation type="journal article" date="2003" name="J. Bacteriol.">
        <title>Comparative genomics of Salmonella enterica serovar Typhi strains Ty2 and CT18.</title>
        <authorList>
            <person name="Deng W."/>
            <person name="Liou S.-R."/>
            <person name="Plunkett G. III"/>
            <person name="Mayhew G.F."/>
            <person name="Rose D.J."/>
            <person name="Burland V."/>
            <person name="Kodoyianni V."/>
            <person name="Schwartz D.C."/>
            <person name="Blattner F.R."/>
        </authorList>
    </citation>
    <scope>NUCLEOTIDE SEQUENCE [LARGE SCALE GENOMIC DNA]</scope>
    <source>
        <strain>ATCC 700931 / Ty2</strain>
    </source>
</reference>